<feature type="chain" id="PRO_0000331354" description="Heme sensor protein HssS">
    <location>
        <begin position="1"/>
        <end position="460"/>
    </location>
</feature>
<feature type="transmembrane region" description="Helical" evidence="2">
    <location>
        <begin position="11"/>
        <end position="31"/>
    </location>
</feature>
<feature type="transmembrane region" description="Helical" evidence="2">
    <location>
        <begin position="164"/>
        <end position="184"/>
    </location>
</feature>
<feature type="domain" description="HAMP" evidence="3">
    <location>
        <begin position="186"/>
        <end position="238"/>
    </location>
</feature>
<feature type="domain" description="Histidine kinase" evidence="4">
    <location>
        <begin position="246"/>
        <end position="456"/>
    </location>
</feature>
<feature type="modified residue" description="Phosphohistidine; by autocatalysis" evidence="4">
    <location>
        <position position="249"/>
    </location>
</feature>
<reference key="1">
    <citation type="journal article" date="2005" name="Proc. Natl. Acad. Sci. U.S.A.">
        <title>Whole genome sequence of Staphylococcus saprophyticus reveals the pathogenesis of uncomplicated urinary tract infection.</title>
        <authorList>
            <person name="Kuroda M."/>
            <person name="Yamashita A."/>
            <person name="Hirakawa H."/>
            <person name="Kumano M."/>
            <person name="Morikawa K."/>
            <person name="Higashide M."/>
            <person name="Maruyama A."/>
            <person name="Inose Y."/>
            <person name="Matoba K."/>
            <person name="Toh H."/>
            <person name="Kuhara S."/>
            <person name="Hattori M."/>
            <person name="Ohta T."/>
        </authorList>
    </citation>
    <scope>NUCLEOTIDE SEQUENCE [LARGE SCALE GENOMIC DNA]</scope>
    <source>
        <strain>ATCC 15305 / DSM 20229 / NCIMB 8711 / NCTC 7292 / S-41</strain>
    </source>
</reference>
<dbReference type="EC" id="2.7.13.3"/>
<dbReference type="EMBL" id="AP008934">
    <property type="protein sequence ID" value="BAE17685.1"/>
    <property type="molecule type" value="Genomic_DNA"/>
</dbReference>
<dbReference type="RefSeq" id="WP_011302492.1">
    <property type="nucleotide sequence ID" value="NZ_MTGA01000036.1"/>
</dbReference>
<dbReference type="SMR" id="Q49ZT9"/>
<dbReference type="GeneID" id="3615006"/>
<dbReference type="KEGG" id="ssp:SSP0540"/>
<dbReference type="PATRIC" id="fig|342451.11.peg.544"/>
<dbReference type="eggNOG" id="COG3850">
    <property type="taxonomic scope" value="Bacteria"/>
</dbReference>
<dbReference type="eggNOG" id="COG5002">
    <property type="taxonomic scope" value="Bacteria"/>
</dbReference>
<dbReference type="HOGENOM" id="CLU_000445_89_6_9"/>
<dbReference type="OrthoDB" id="9813151at2"/>
<dbReference type="Proteomes" id="UP000006371">
    <property type="component" value="Chromosome"/>
</dbReference>
<dbReference type="GO" id="GO:0005886">
    <property type="term" value="C:plasma membrane"/>
    <property type="evidence" value="ECO:0007669"/>
    <property type="project" value="UniProtKB-SubCell"/>
</dbReference>
<dbReference type="GO" id="GO:0005524">
    <property type="term" value="F:ATP binding"/>
    <property type="evidence" value="ECO:0007669"/>
    <property type="project" value="UniProtKB-KW"/>
</dbReference>
<dbReference type="GO" id="GO:0000155">
    <property type="term" value="F:phosphorelay sensor kinase activity"/>
    <property type="evidence" value="ECO:0007669"/>
    <property type="project" value="InterPro"/>
</dbReference>
<dbReference type="CDD" id="cd06225">
    <property type="entry name" value="HAMP"/>
    <property type="match status" value="1"/>
</dbReference>
<dbReference type="CDD" id="cd00075">
    <property type="entry name" value="HATPase"/>
    <property type="match status" value="1"/>
</dbReference>
<dbReference type="CDD" id="cd00082">
    <property type="entry name" value="HisKA"/>
    <property type="match status" value="1"/>
</dbReference>
<dbReference type="FunFam" id="3.30.565.10:FF:000006">
    <property type="entry name" value="Sensor histidine kinase WalK"/>
    <property type="match status" value="1"/>
</dbReference>
<dbReference type="Gene3D" id="1.10.287.130">
    <property type="match status" value="1"/>
</dbReference>
<dbReference type="Gene3D" id="6.10.340.10">
    <property type="match status" value="1"/>
</dbReference>
<dbReference type="Gene3D" id="3.30.565.10">
    <property type="entry name" value="Histidine kinase-like ATPase, C-terminal domain"/>
    <property type="match status" value="1"/>
</dbReference>
<dbReference type="InterPro" id="IPR050398">
    <property type="entry name" value="Bact_Sensor_His_Kinase"/>
</dbReference>
<dbReference type="InterPro" id="IPR003660">
    <property type="entry name" value="HAMP_dom"/>
</dbReference>
<dbReference type="InterPro" id="IPR036890">
    <property type="entry name" value="HATPase_C_sf"/>
</dbReference>
<dbReference type="InterPro" id="IPR005467">
    <property type="entry name" value="His_kinase_dom"/>
</dbReference>
<dbReference type="InterPro" id="IPR003661">
    <property type="entry name" value="HisK_dim/P_dom"/>
</dbReference>
<dbReference type="InterPro" id="IPR036097">
    <property type="entry name" value="HisK_dim/P_sf"/>
</dbReference>
<dbReference type="InterPro" id="IPR004358">
    <property type="entry name" value="Sig_transdc_His_kin-like_C"/>
</dbReference>
<dbReference type="PANTHER" id="PTHR45528:SF11">
    <property type="entry name" value="HISTIDINE KINASE"/>
    <property type="match status" value="1"/>
</dbReference>
<dbReference type="PANTHER" id="PTHR45528">
    <property type="entry name" value="SENSOR HISTIDINE KINASE CPXA"/>
    <property type="match status" value="1"/>
</dbReference>
<dbReference type="Pfam" id="PF00672">
    <property type="entry name" value="HAMP"/>
    <property type="match status" value="1"/>
</dbReference>
<dbReference type="Pfam" id="PF02518">
    <property type="entry name" value="HATPase_c"/>
    <property type="match status" value="1"/>
</dbReference>
<dbReference type="Pfam" id="PF00512">
    <property type="entry name" value="HisKA"/>
    <property type="match status" value="1"/>
</dbReference>
<dbReference type="PRINTS" id="PR00344">
    <property type="entry name" value="BCTRLSENSOR"/>
</dbReference>
<dbReference type="SMART" id="SM00304">
    <property type="entry name" value="HAMP"/>
    <property type="match status" value="1"/>
</dbReference>
<dbReference type="SMART" id="SM00387">
    <property type="entry name" value="HATPase_c"/>
    <property type="match status" value="1"/>
</dbReference>
<dbReference type="SMART" id="SM00388">
    <property type="entry name" value="HisKA"/>
    <property type="match status" value="1"/>
</dbReference>
<dbReference type="SUPFAM" id="SSF55874">
    <property type="entry name" value="ATPase domain of HSP90 chaperone/DNA topoisomerase II/histidine kinase"/>
    <property type="match status" value="1"/>
</dbReference>
<dbReference type="SUPFAM" id="SSF158472">
    <property type="entry name" value="HAMP domain-like"/>
    <property type="match status" value="1"/>
</dbReference>
<dbReference type="SUPFAM" id="SSF47384">
    <property type="entry name" value="Homodimeric domain of signal transducing histidine kinase"/>
    <property type="match status" value="1"/>
</dbReference>
<dbReference type="PROSITE" id="PS50885">
    <property type="entry name" value="HAMP"/>
    <property type="match status" value="1"/>
</dbReference>
<dbReference type="PROSITE" id="PS50109">
    <property type="entry name" value="HIS_KIN"/>
    <property type="match status" value="1"/>
</dbReference>
<keyword id="KW-0067">ATP-binding</keyword>
<keyword id="KW-1003">Cell membrane</keyword>
<keyword id="KW-0418">Kinase</keyword>
<keyword id="KW-0472">Membrane</keyword>
<keyword id="KW-0547">Nucleotide-binding</keyword>
<keyword id="KW-0597">Phosphoprotein</keyword>
<keyword id="KW-1185">Reference proteome</keyword>
<keyword id="KW-0808">Transferase</keyword>
<keyword id="KW-0812">Transmembrane</keyword>
<keyword id="KW-1133">Transmembrane helix</keyword>
<keyword id="KW-0902">Two-component regulatory system</keyword>
<keyword id="KW-0843">Virulence</keyword>
<evidence type="ECO:0000250" key="1"/>
<evidence type="ECO:0000255" key="2"/>
<evidence type="ECO:0000255" key="3">
    <source>
        <dbReference type="PROSITE-ProRule" id="PRU00102"/>
    </source>
</evidence>
<evidence type="ECO:0000255" key="4">
    <source>
        <dbReference type="PROSITE-ProRule" id="PRU00107"/>
    </source>
</evidence>
<comment type="function">
    <text evidence="1">Member of the two-component regulatory system HssS/HssR involved in intracellular heme homeostasis and tempering of staphylococcal virulence. HssS functions as a heme sensor histidine kinase which is autophosphorylated at a histidine residue and transfers its phosphate group to an aspartate residue of HssR. HssR/HssS activates the expression of hrtAB, an efflux pump, in response to extracellular heme, hemin, hemoglobin or blood (By similarity).</text>
</comment>
<comment type="catalytic activity">
    <reaction>
        <text>ATP + protein L-histidine = ADP + protein N-phospho-L-histidine.</text>
        <dbReference type="EC" id="2.7.13.3"/>
    </reaction>
</comment>
<comment type="subcellular location">
    <subcellularLocation>
        <location evidence="1">Cell membrane</location>
        <topology evidence="1">Multi-pass membrane protein</topology>
    </subcellularLocation>
</comment>
<comment type="PTM">
    <text evidence="1">Autophosphorylated.</text>
</comment>
<sequence>MFKSLYTRIAIYTITVMIFSAVASFLCTNIIYHNYLKENNDAKIMRTLKDSIQYQKESRIEASAPFFKHLGEMNYQVMTISEDGHRTYYGTEFRKDNISKKTAESVLHGKDYHGIKNLPYNPIITGFFENTTKNTVGIAYQSKGHTYAVFMRPDIGKTFSEFRIFLAILITLLLLFSIILVISSTYAIIKPIQQLKRATERLMHGNFDEVIHVTRKDEFGTLQYRFDKMRLSLKQLDDMRQHFVQNVSHEIKTPLTHIHHLLDLLKFAKTDNAREQYIEEIYEVTTQLSELTKALLLLSEIDNGAHLDFDDDIQLNQLIKKIIRHEQFSANEKDLIIMSDLETISMNGNERLLHQAFQNLITNAIKYSTTGGMVDVTLSQNLETITCTITDDGQGMSAETQARIFERFYKSSNHDNSNGLGLAIAKAIFELHHGTITVDSEKNAGTTFTITFKKVPKTIS</sequence>
<accession>Q49ZT9</accession>
<proteinExistence type="inferred from homology"/>
<name>HSSS_STAS1</name>
<gene>
    <name type="primary">hssS</name>
    <name type="ordered locus">SSP0540</name>
</gene>
<organism>
    <name type="scientific">Staphylococcus saprophyticus subsp. saprophyticus (strain ATCC 15305 / DSM 20229 / NCIMB 8711 / NCTC 7292 / S-41)</name>
    <dbReference type="NCBI Taxonomy" id="342451"/>
    <lineage>
        <taxon>Bacteria</taxon>
        <taxon>Bacillati</taxon>
        <taxon>Bacillota</taxon>
        <taxon>Bacilli</taxon>
        <taxon>Bacillales</taxon>
        <taxon>Staphylococcaceae</taxon>
        <taxon>Staphylococcus</taxon>
    </lineage>
</organism>
<protein>
    <recommendedName>
        <fullName>Heme sensor protein HssS</fullName>
        <ecNumber>2.7.13.3</ecNumber>
    </recommendedName>
</protein>